<organism>
    <name type="scientific">Selenomonas ruminantium</name>
    <dbReference type="NCBI Taxonomy" id="971"/>
    <lineage>
        <taxon>Bacteria</taxon>
        <taxon>Bacillati</taxon>
        <taxon>Bacillota</taxon>
        <taxon>Negativicutes</taxon>
        <taxon>Selenomonadales</taxon>
        <taxon>Selenomonadaceae</taxon>
        <taxon>Selenomonas</taxon>
    </lineage>
</organism>
<accession>O50657</accession>
<accession>Q7DFY1</accession>
<feature type="chain" id="PRO_0000149910" description="Lysine/ornithine decarboxylase">
    <location>
        <begin position="1"/>
        <end position="393"/>
    </location>
</feature>
<feature type="active site" description="Proton donor; shared with dimeric partner" evidence="1">
    <location>
        <position position="323"/>
    </location>
</feature>
<feature type="modified residue" description="N6-(pyridoxal phosphate)lysine" evidence="1">
    <location>
        <position position="51"/>
    </location>
</feature>
<feature type="mutagenesis site" description="2-fold increase in substrate specificity towards ornithine. 5-fold increase in substrate specificity towards ornithine; when associated with D-54. 70-fold increase in substrate specificity towards ornithine; when associated with D-54 and A-322. 16-fold increase in substrate specificity towards ornithine; when associated with D-54; T-322 and L-326." evidence="2">
    <original>AGV</original>
    <variation>VTP</variation>
    <location>
        <begin position="44"/>
        <end position="46"/>
    </location>
</feature>
<feature type="mutagenesis site" description="No change in substrate specificity.">
    <original>A</original>
    <variation>C</variation>
    <location>
        <position position="52"/>
    </location>
</feature>
<feature type="mutagenesis site" description="3-fold increase in substrate specificity towards ornithine. 5-fold increase in substrate specificity towards ornithine; when associated with 44-V--P-46. 70-fold increase in substrate specificity towards ornithine; when associated with 44-V--P-46 and A-322. 16-fold increase in substrate specificity towards ornithine; when associated with 44-V--P-46; T-322 and L-326." evidence="2">
    <original>P</original>
    <variation>D</variation>
    <location>
        <position position="54"/>
    </location>
</feature>
<feature type="mutagenesis site" description="7-fold increase in substrate specificity towards ornithine." evidence="2">
    <original>G</original>
    <variation>W</variation>
    <location>
        <position position="319"/>
    </location>
</feature>
<feature type="mutagenesis site" description="29-fold increase in substrate specificity towards ornithine. 70-fold increase in substrate specificity towards ornithine; when associated with 44-V--P-46 and D-54." evidence="2">
    <original>S</original>
    <variation>A</variation>
    <location>
        <position position="322"/>
    </location>
</feature>
<feature type="mutagenesis site" description="16-fold increase in substrate specificity towards ornithine; when associated with L-326. 16-fold increase in substrate specificity towards ornithine; when associated with 44-V--P-46; D-54 and L-326." evidence="2">
    <original>S</original>
    <variation>T</variation>
    <location>
        <position position="322"/>
    </location>
</feature>
<feature type="mutagenesis site" description="16-fold increase in substrate specificity towards ornithine; when associated with T-322. 16-fold increase in substrate specificity towards ornithine; when associated with 44-V--P-46; D-54 and T-322." evidence="2">
    <original>I</original>
    <variation>L</variation>
    <location>
        <position position="326"/>
    </location>
</feature>
<feature type="mutagenesis site" description="Loss of dimer formation and decarboxylase activity." evidence="2">
    <original>G</original>
    <variation>D</variation>
    <location>
        <position position="350"/>
    </location>
</feature>
<feature type="helix" evidence="5">
    <location>
        <begin position="8"/>
        <end position="17"/>
    </location>
</feature>
<feature type="strand" evidence="5">
    <location>
        <begin position="20"/>
        <end position="25"/>
    </location>
</feature>
<feature type="helix" evidence="5">
    <location>
        <begin position="27"/>
        <end position="40"/>
    </location>
</feature>
<feature type="strand" evidence="5">
    <location>
        <begin position="44"/>
        <end position="49"/>
    </location>
</feature>
<feature type="helix" evidence="5">
    <location>
        <begin position="50"/>
        <end position="52"/>
    </location>
</feature>
<feature type="helix" evidence="5">
    <location>
        <begin position="56"/>
        <end position="64"/>
    </location>
</feature>
<feature type="strand" evidence="5">
    <location>
        <begin position="68"/>
        <end position="71"/>
    </location>
</feature>
<feature type="helix" evidence="5">
    <location>
        <begin position="74"/>
        <end position="82"/>
    </location>
</feature>
<feature type="helix" evidence="5">
    <location>
        <begin position="87"/>
        <end position="89"/>
    </location>
</feature>
<feature type="strand" evidence="5">
    <location>
        <begin position="90"/>
        <end position="92"/>
    </location>
</feature>
<feature type="helix" evidence="5">
    <location>
        <begin position="99"/>
        <end position="108"/>
    </location>
</feature>
<feature type="strand" evidence="5">
    <location>
        <begin position="112"/>
        <end position="115"/>
    </location>
</feature>
<feature type="helix" evidence="5">
    <location>
        <begin position="118"/>
        <end position="120"/>
    </location>
</feature>
<feature type="helix" evidence="5">
    <location>
        <begin position="121"/>
        <end position="127"/>
    </location>
</feature>
<feature type="strand" evidence="6">
    <location>
        <begin position="128"/>
        <end position="130"/>
    </location>
</feature>
<feature type="strand" evidence="5">
    <location>
        <begin position="132"/>
        <end position="137"/>
    </location>
</feature>
<feature type="strand" evidence="5">
    <location>
        <begin position="142"/>
        <end position="146"/>
    </location>
</feature>
<feature type="strand" evidence="5">
    <location>
        <begin position="149"/>
        <end position="152"/>
    </location>
</feature>
<feature type="helix" evidence="5">
    <location>
        <begin position="156"/>
        <end position="158"/>
    </location>
</feature>
<feature type="helix" evidence="5">
    <location>
        <begin position="159"/>
        <end position="168"/>
    </location>
</feature>
<feature type="strand" evidence="5">
    <location>
        <begin position="172"/>
        <end position="177"/>
    </location>
</feature>
<feature type="strand" evidence="5">
    <location>
        <begin position="182"/>
        <end position="184"/>
    </location>
</feature>
<feature type="helix" evidence="5">
    <location>
        <begin position="188"/>
        <end position="206"/>
    </location>
</feature>
<feature type="strand" evidence="5">
    <location>
        <begin position="213"/>
        <end position="215"/>
    </location>
</feature>
<feature type="helix" evidence="5">
    <location>
        <begin position="232"/>
        <end position="246"/>
    </location>
</feature>
<feature type="strand" evidence="5">
    <location>
        <begin position="250"/>
        <end position="254"/>
    </location>
</feature>
<feature type="helix" evidence="5">
    <location>
        <begin position="258"/>
        <end position="262"/>
    </location>
</feature>
<feature type="strand" evidence="5">
    <location>
        <begin position="265"/>
        <end position="275"/>
    </location>
</feature>
<feature type="strand" evidence="5">
    <location>
        <begin position="277"/>
        <end position="280"/>
    </location>
</feature>
<feature type="strand" evidence="5">
    <location>
        <begin position="282"/>
        <end position="287"/>
    </location>
</feature>
<feature type="turn" evidence="5">
    <location>
        <begin position="289"/>
        <end position="291"/>
    </location>
</feature>
<feature type="helix" evidence="5">
    <location>
        <begin position="292"/>
        <end position="294"/>
    </location>
</feature>
<feature type="helix" evidence="5">
    <location>
        <begin position="295"/>
        <end position="298"/>
    </location>
</feature>
<feature type="strand" evidence="4">
    <location>
        <begin position="305"/>
        <end position="307"/>
    </location>
</feature>
<feature type="strand" evidence="5">
    <location>
        <begin position="314"/>
        <end position="319"/>
    </location>
</feature>
<feature type="strand" evidence="5">
    <location>
        <begin position="321"/>
        <end position="323"/>
    </location>
</feature>
<feature type="strand" evidence="5">
    <location>
        <begin position="328"/>
        <end position="335"/>
    </location>
</feature>
<feature type="strand" evidence="5">
    <location>
        <begin position="343"/>
        <end position="346"/>
    </location>
</feature>
<feature type="strand" evidence="5">
    <location>
        <begin position="351"/>
        <end position="353"/>
    </location>
</feature>
<feature type="helix" evidence="5">
    <location>
        <begin position="354"/>
        <end position="356"/>
    </location>
</feature>
<feature type="helix" evidence="5">
    <location>
        <begin position="360"/>
        <end position="362"/>
    </location>
</feature>
<feature type="strand" evidence="5">
    <location>
        <begin position="368"/>
        <end position="370"/>
    </location>
</feature>
<feature type="helix" evidence="5">
    <location>
        <begin position="371"/>
        <end position="373"/>
    </location>
</feature>
<feature type="helix" evidence="5">
    <location>
        <begin position="375"/>
        <end position="383"/>
    </location>
</feature>
<comment type="function">
    <text>Decarboxylates both L-lysine and L-ornithine with similar catalytic efficiency.</text>
</comment>
<comment type="catalytic activity">
    <reaction>
        <text>L-lysine + H(+) = cadaverine + CO2</text>
        <dbReference type="Rhea" id="RHEA:22352"/>
        <dbReference type="ChEBI" id="CHEBI:15378"/>
        <dbReference type="ChEBI" id="CHEBI:16526"/>
        <dbReference type="ChEBI" id="CHEBI:32551"/>
        <dbReference type="ChEBI" id="CHEBI:58384"/>
        <dbReference type="EC" id="4.1.1.18"/>
    </reaction>
</comment>
<comment type="catalytic activity">
    <reaction>
        <text>L-ornithine + H(+) = putrescine + CO2</text>
        <dbReference type="Rhea" id="RHEA:22964"/>
        <dbReference type="ChEBI" id="CHEBI:15378"/>
        <dbReference type="ChEBI" id="CHEBI:16526"/>
        <dbReference type="ChEBI" id="CHEBI:46911"/>
        <dbReference type="ChEBI" id="CHEBI:326268"/>
        <dbReference type="EC" id="4.1.1.17"/>
    </reaction>
</comment>
<comment type="cofactor">
    <cofactor>
        <name>pyridoxal 5'-phosphate</name>
        <dbReference type="ChEBI" id="CHEBI:597326"/>
    </cofactor>
</comment>
<comment type="activity regulation">
    <text>Inhibited competitively by both alpha-difluoromethyllysine and alpha-difluoromethylornithine.</text>
</comment>
<comment type="biophysicochemical properties">
    <kinetics>
        <KM>1.5 mM for L-lysine</KM>
        <KM>0.96 mM for L-ornithine</KM>
    </kinetics>
</comment>
<comment type="pathway">
    <text>Amine and polyamine biosynthesis; putrescine biosynthesis via L-ornithine pathway; putrescine from L-ornithine: step 1/1.</text>
</comment>
<comment type="subunit">
    <text>Homodimer.</text>
</comment>
<comment type="miscellaneous">
    <text>Mutagen studies showed that it is possible to convert S.ruminantium LDC to an enzyme with a preference for decarboxylating L-ornithine when five amino acid residues (Ala-44, Gly-45, Val-46, Pro-54 and Ser-322) were replaced with the corresponding ones found in mouse ODC.</text>
</comment>
<comment type="similarity">
    <text evidence="3">Belongs to the Orn/Lys/Arg decarboxylase class-II family.</text>
</comment>
<gene>
    <name type="primary">ldc</name>
</gene>
<proteinExistence type="evidence at protein level"/>
<dbReference type="EC" id="4.1.1.17"/>
<dbReference type="EC" id="4.1.1.18"/>
<dbReference type="EMBL" id="AB011029">
    <property type="protein sequence ID" value="BAA24923.1"/>
    <property type="molecule type" value="Genomic_DNA"/>
</dbReference>
<dbReference type="EMBL" id="AB104737">
    <property type="protein sequence ID" value="BAC57940.1"/>
    <property type="molecule type" value="Genomic_DNA"/>
</dbReference>
<dbReference type="PDB" id="5GJM">
    <property type="method" value="X-ray"/>
    <property type="resolution" value="2.91 A"/>
    <property type="chains" value="A/B=1-393"/>
</dbReference>
<dbReference type="PDB" id="5GJN">
    <property type="method" value="X-ray"/>
    <property type="resolution" value="2.00 A"/>
    <property type="chains" value="A=1-393"/>
</dbReference>
<dbReference type="PDB" id="5GJO">
    <property type="method" value="X-ray"/>
    <property type="resolution" value="1.80 A"/>
    <property type="chains" value="A/B=1-393"/>
</dbReference>
<dbReference type="PDB" id="5GJP">
    <property type="method" value="X-ray"/>
    <property type="resolution" value="2.50 A"/>
    <property type="chains" value="A=1-393"/>
</dbReference>
<dbReference type="PDBsum" id="5GJM"/>
<dbReference type="PDBsum" id="5GJN"/>
<dbReference type="PDBsum" id="5GJO"/>
<dbReference type="PDBsum" id="5GJP"/>
<dbReference type="SMR" id="O50657"/>
<dbReference type="STRING" id="971.SAMN02910356_00924"/>
<dbReference type="OMA" id="SFFVCDL"/>
<dbReference type="BioCyc" id="MetaCyc:MONOMER-12423"/>
<dbReference type="BRENDA" id="4.1.1.18">
    <property type="organism ID" value="5668"/>
</dbReference>
<dbReference type="BRENDA" id="4.1.1.B12">
    <property type="organism ID" value="5668"/>
</dbReference>
<dbReference type="SABIO-RK" id="O50657"/>
<dbReference type="UniPathway" id="UPA00535">
    <property type="reaction ID" value="UER00288"/>
</dbReference>
<dbReference type="GO" id="GO:0005737">
    <property type="term" value="C:cytoplasm"/>
    <property type="evidence" value="ECO:0007669"/>
    <property type="project" value="TreeGrafter"/>
</dbReference>
<dbReference type="GO" id="GO:0008923">
    <property type="term" value="F:lysine decarboxylase activity"/>
    <property type="evidence" value="ECO:0007669"/>
    <property type="project" value="UniProtKB-EC"/>
</dbReference>
<dbReference type="GO" id="GO:0004586">
    <property type="term" value="F:ornithine decarboxylase activity"/>
    <property type="evidence" value="ECO:0007669"/>
    <property type="project" value="UniProtKB-EC"/>
</dbReference>
<dbReference type="GO" id="GO:0033387">
    <property type="term" value="P:putrescine biosynthetic process from arginine, via ornithine"/>
    <property type="evidence" value="ECO:0007669"/>
    <property type="project" value="UniProtKB-UniPathway"/>
</dbReference>
<dbReference type="GO" id="GO:0008295">
    <property type="term" value="P:spermidine biosynthetic process"/>
    <property type="evidence" value="ECO:0007669"/>
    <property type="project" value="UniProtKB-KW"/>
</dbReference>
<dbReference type="CDD" id="cd00622">
    <property type="entry name" value="PLPDE_III_ODC"/>
    <property type="match status" value="1"/>
</dbReference>
<dbReference type="FunFam" id="3.20.20.10:FF:000008">
    <property type="entry name" value="Ornithine decarboxylase"/>
    <property type="match status" value="1"/>
</dbReference>
<dbReference type="Gene3D" id="3.20.20.10">
    <property type="entry name" value="Alanine racemase"/>
    <property type="match status" value="1"/>
</dbReference>
<dbReference type="Gene3D" id="2.40.37.10">
    <property type="entry name" value="Lyase, Ornithine Decarboxylase, Chain A, domain 1"/>
    <property type="match status" value="1"/>
</dbReference>
<dbReference type="InterPro" id="IPR009006">
    <property type="entry name" value="Ala_racemase/Decarboxylase_C"/>
</dbReference>
<dbReference type="InterPro" id="IPR022643">
    <property type="entry name" value="De-COase2_C"/>
</dbReference>
<dbReference type="InterPro" id="IPR022657">
    <property type="entry name" value="De-COase2_CS"/>
</dbReference>
<dbReference type="InterPro" id="IPR022644">
    <property type="entry name" value="De-COase2_N"/>
</dbReference>
<dbReference type="InterPro" id="IPR022653">
    <property type="entry name" value="De-COase2_pyr-phos_BS"/>
</dbReference>
<dbReference type="InterPro" id="IPR000183">
    <property type="entry name" value="Orn/DAP/Arg_de-COase"/>
</dbReference>
<dbReference type="InterPro" id="IPR002433">
    <property type="entry name" value="Orn_de-COase"/>
</dbReference>
<dbReference type="InterPro" id="IPR029066">
    <property type="entry name" value="PLP-binding_barrel"/>
</dbReference>
<dbReference type="PANTHER" id="PTHR11482">
    <property type="entry name" value="ARGININE/DIAMINOPIMELATE/ORNITHINE DECARBOXYLASE"/>
    <property type="match status" value="1"/>
</dbReference>
<dbReference type="PANTHER" id="PTHR11482:SF6">
    <property type="entry name" value="ORNITHINE DECARBOXYLASE 1-RELATED"/>
    <property type="match status" value="1"/>
</dbReference>
<dbReference type="Pfam" id="PF02784">
    <property type="entry name" value="Orn_Arg_deC_N"/>
    <property type="match status" value="1"/>
</dbReference>
<dbReference type="Pfam" id="PF00278">
    <property type="entry name" value="Orn_DAP_Arg_deC"/>
    <property type="match status" value="1"/>
</dbReference>
<dbReference type="PRINTS" id="PR01179">
    <property type="entry name" value="ODADCRBXLASE"/>
</dbReference>
<dbReference type="PRINTS" id="PR01182">
    <property type="entry name" value="ORNDCRBXLASE"/>
</dbReference>
<dbReference type="SUPFAM" id="SSF50621">
    <property type="entry name" value="Alanine racemase C-terminal domain-like"/>
    <property type="match status" value="1"/>
</dbReference>
<dbReference type="SUPFAM" id="SSF51419">
    <property type="entry name" value="PLP-binding barrel"/>
    <property type="match status" value="1"/>
</dbReference>
<dbReference type="PROSITE" id="PS00878">
    <property type="entry name" value="ODR_DC_2_1"/>
    <property type="match status" value="1"/>
</dbReference>
<dbReference type="PROSITE" id="PS00879">
    <property type="entry name" value="ODR_DC_2_2"/>
    <property type="match status" value="1"/>
</dbReference>
<reference key="1">
    <citation type="journal article" date="2000" name="J. Bacteriol.">
        <title>Gene cloning and molecular characterization of lysine decarboxylase from Selenomonas ruminantium delineate its evolutionary relationship to ornithine decarboxylases from eukaryotes.</title>
        <authorList>
            <person name="Takatsuka Y."/>
            <person name="Yamaguchi Y."/>
            <person name="Ono M."/>
            <person name="Kamio Y."/>
        </authorList>
    </citation>
    <scope>NUCLEOTIDE SEQUENCE [GENOMIC DNA]</scope>
    <scope>PROTEIN SEQUENCE OF 1-28; 30-37; 52-64; 153-163; 276-288 AND 344-352</scope>
    <scope>MUTAGENESIS OF 44-ALA--VAL-46; PRO-54; GLY-319; SER-322; ILE-326 AND GLY-350</scope>
    <source>
        <strain>Subsp. lactilytica</strain>
    </source>
</reference>
<evidence type="ECO:0000250" key="1"/>
<evidence type="ECO:0000269" key="2">
    <source>
    </source>
</evidence>
<evidence type="ECO:0000305" key="3"/>
<evidence type="ECO:0007829" key="4">
    <source>
        <dbReference type="PDB" id="5GJM"/>
    </source>
</evidence>
<evidence type="ECO:0007829" key="5">
    <source>
        <dbReference type="PDB" id="5GJO"/>
    </source>
</evidence>
<evidence type="ECO:0007829" key="6">
    <source>
        <dbReference type="PDB" id="5GJP"/>
    </source>
</evidence>
<name>DCLO_SELRU</name>
<sequence length="393" mass="43214">MKNFRLSEKEVKTLAKRIPTPFLVASLDKVEENYQFMRRHLPRAGVFYAMKANPTPEILSLLAGLGSHFDVASAGEMEILHELGVDGSQMIYANPVKDARGLKAAADYNVRRFTFDDPSEIDKMAKAVPGADVLVRIAVRNNKALVDLNTKFGAPVEEALDLLKAAQDAGLHAMGICFHVGSQSLSTAAYEEALLVARRLFDEAEEMGMHLTDLDIGGGFPVPDAKGLNVDLAAMMEAINKQIDRLFPDTAVWTEPGRYMCGTAVNLVTSVIGTKTRGEQPWYILDEGIYGCFSGIMYDHWTYPLHCFGKGNKKPSTFGGPSCDGIDVLYRDFMAPELKIGDKVLVTEMGSYTSVSATRFNGFYLAPTIIFEDQPEYAARLTEDDDVKKKAAV</sequence>
<keyword id="KW-0002">3D-structure</keyword>
<keyword id="KW-0210">Decarboxylase</keyword>
<keyword id="KW-0903">Direct protein sequencing</keyword>
<keyword id="KW-0456">Lyase</keyword>
<keyword id="KW-0620">Polyamine biosynthesis</keyword>
<keyword id="KW-0661">Putrescine biosynthesis</keyword>
<keyword id="KW-0663">Pyridoxal phosphate</keyword>
<keyword id="KW-0745">Spermidine biosynthesis</keyword>
<protein>
    <recommendedName>
        <fullName>Lysine/ornithine decarboxylase</fullName>
        <shortName>LDC</shortName>
        <ecNumber>4.1.1.17</ecNumber>
        <ecNumber>4.1.1.18</ecNumber>
    </recommendedName>
</protein>